<gene>
    <name type="primary">ndhD2</name>
    <name type="ordered locus">slr1291</name>
</gene>
<comment type="function">
    <text>NDH-1 shuttles electrons from NAD(P)H, via FMN and iron-sulfur (Fe-S) centers, to quinones in the respiratory chain. The immediate electron acceptor for the enzyme in this species is believed to be plastoquinone. Couples the redox reaction to proton translocation (for every two electrons transferred, four hydrogen ions are translocated across the cytoplasmic membrane), and thus conserves the redox energy in a proton gradient.</text>
</comment>
<comment type="catalytic activity">
    <reaction>
        <text>a plastoquinone + NADH + (n+1) H(+)(in) = a plastoquinol + NAD(+) + n H(+)(out)</text>
        <dbReference type="Rhea" id="RHEA:42608"/>
        <dbReference type="Rhea" id="RHEA-COMP:9561"/>
        <dbReference type="Rhea" id="RHEA-COMP:9562"/>
        <dbReference type="ChEBI" id="CHEBI:15378"/>
        <dbReference type="ChEBI" id="CHEBI:17757"/>
        <dbReference type="ChEBI" id="CHEBI:57540"/>
        <dbReference type="ChEBI" id="CHEBI:57945"/>
        <dbReference type="ChEBI" id="CHEBI:62192"/>
    </reaction>
</comment>
<comment type="catalytic activity">
    <reaction>
        <text>a plastoquinone + NADPH + (n+1) H(+)(in) = a plastoquinol + NADP(+) + n H(+)(out)</text>
        <dbReference type="Rhea" id="RHEA:42612"/>
        <dbReference type="Rhea" id="RHEA-COMP:9561"/>
        <dbReference type="Rhea" id="RHEA-COMP:9562"/>
        <dbReference type="ChEBI" id="CHEBI:15378"/>
        <dbReference type="ChEBI" id="CHEBI:17757"/>
        <dbReference type="ChEBI" id="CHEBI:57783"/>
        <dbReference type="ChEBI" id="CHEBI:58349"/>
        <dbReference type="ChEBI" id="CHEBI:62192"/>
    </reaction>
</comment>
<comment type="subcellular location">
    <subcellularLocation>
        <location evidence="1">Cellular thylakoid membrane</location>
        <topology evidence="1">Multi-pass membrane protein</topology>
    </subcellularLocation>
</comment>
<comment type="similarity">
    <text evidence="3">Belongs to the complex I subunit 4 family.</text>
</comment>
<comment type="sequence caution" evidence="3">
    <conflict type="frameshift">
        <sequence resource="EMBL-CDS" id="AAA85105"/>
    </conflict>
</comment>
<sequence>MLEHFPWLTTMIALPLVAALFIPLIPDKDGKQVRWYALGVGLADFVLMSYVFWTNYDISSTGFQLQEKFSWIPQFGLSWSVSVDGISMPLVLLAGLVTTLSIFAAWQVDHKPRLFYFLMLVLYAAQIGVFVAQDMLLLFIMWELELVPVYLLVCIWGGQKRQYAAMKFLLYTAAASVFILVAALGLAFYGDVTTFDIAELGLKDYPIALELFLYAGLLIAFGVKLAIFPFHTWLPDAHGEASAPVSMILAGVLLKMGGYGLIRLNLGLLEDAHVYFAPILVILGVVNIIYGGFSSFAQDNMKRRLAYSSVSHMGFVLLGIASFTDLGISGAMLQMLSHGLIAAVLFFLAGVTYDRTHTLSLAQMGNIGKVMPTVFALFTMGAMASLALPGMSGFVSELAVFVGVSSSDIYSTPFKTVTVFLAAVGLVLTPIYLLSMLRQLFYGNNIPPSCNLEQDNLSANSDQEAVCFGTSCVLPGNAIYDDARPREVFIAACFLLPIIAVGLYPKLATQTYDATTVAVNSQVRQSYVQIAETNPRVYAEALTAPHIPTTDFATVKVQP</sequence>
<proteinExistence type="inferred from homology"/>
<feature type="chain" id="PRO_0000118036" description="NAD(P)H-quinone oxidoreductase chain 4-2">
    <location>
        <begin position="1"/>
        <end position="559"/>
    </location>
</feature>
<feature type="transmembrane region" description="Helical" evidence="2">
    <location>
        <begin position="5"/>
        <end position="25"/>
    </location>
</feature>
<feature type="transmembrane region" description="Helical" evidence="2">
    <location>
        <begin position="35"/>
        <end position="55"/>
    </location>
</feature>
<feature type="transmembrane region" description="Helical" evidence="2">
    <location>
        <begin position="86"/>
        <end position="106"/>
    </location>
</feature>
<feature type="transmembrane region" description="Helical" evidence="2">
    <location>
        <begin position="114"/>
        <end position="134"/>
    </location>
</feature>
<feature type="transmembrane region" description="Helical" evidence="2">
    <location>
        <begin position="136"/>
        <end position="156"/>
    </location>
</feature>
<feature type="transmembrane region" description="Helical" evidence="2">
    <location>
        <begin position="168"/>
        <end position="188"/>
    </location>
</feature>
<feature type="transmembrane region" description="Helical" evidence="2">
    <location>
        <begin position="207"/>
        <end position="227"/>
    </location>
</feature>
<feature type="transmembrane region" description="Helical" evidence="2">
    <location>
        <begin position="242"/>
        <end position="262"/>
    </location>
</feature>
<feature type="transmembrane region" description="Helical" evidence="2">
    <location>
        <begin position="274"/>
        <end position="294"/>
    </location>
</feature>
<feature type="transmembrane region" description="Helical" evidence="2">
    <location>
        <begin position="310"/>
        <end position="330"/>
    </location>
</feature>
<feature type="transmembrane region" description="Helical" evidence="2">
    <location>
        <begin position="331"/>
        <end position="351"/>
    </location>
</feature>
<feature type="transmembrane region" description="Helical" evidence="2">
    <location>
        <begin position="374"/>
        <end position="394"/>
    </location>
</feature>
<feature type="transmembrane region" description="Helical" evidence="2">
    <location>
        <begin position="417"/>
        <end position="437"/>
    </location>
</feature>
<feature type="transmembrane region" description="Helical" evidence="2">
    <location>
        <begin position="488"/>
        <end position="508"/>
    </location>
</feature>
<feature type="sequence conflict" description="In Ref. 1; AAA85105." evidence="3" ref="1">
    <original>Q</original>
    <variation>I</variation>
    <location>
        <position position="64"/>
    </location>
</feature>
<feature type="sequence conflict" description="In Ref. 1; AAA85105." evidence="3" ref="1">
    <original>DH</original>
    <variation>TS</variation>
    <location>
        <begin position="109"/>
        <end position="110"/>
    </location>
</feature>
<feature type="sequence conflict" description="In Ref. 1; AAA85105." evidence="3" ref="1">
    <original>LV</original>
    <variation>VL</variation>
    <location>
        <begin position="120"/>
        <end position="121"/>
    </location>
</feature>
<feature type="sequence conflict" description="In Ref. 1; AAA85105." evidence="3" ref="1">
    <original>A</original>
    <variation>S</variation>
    <location>
        <position position="124"/>
    </location>
</feature>
<feature type="sequence conflict" description="In Ref. 1; AAA85105." evidence="3" ref="1">
    <original>GVF</original>
    <variation>VLI</variation>
    <location>
        <begin position="128"/>
        <end position="130"/>
    </location>
</feature>
<feature type="sequence conflict" description="In Ref. 1." evidence="3" ref="1">
    <original>M</original>
    <variation>R</variation>
    <location>
        <position position="135"/>
    </location>
</feature>
<feature type="sequence conflict" description="In Ref. 1." evidence="3" ref="1">
    <original>F</original>
    <variation>LS</variation>
    <location>
        <position position="139"/>
    </location>
</feature>
<feature type="sequence conflict" description="In Ref. 1; AAA85105." evidence="3" ref="1">
    <original>CI</original>
    <variation>VS</variation>
    <location>
        <begin position="154"/>
        <end position="155"/>
    </location>
</feature>
<feature type="sequence conflict" description="In Ref. 1; AAA85105." evidence="3" ref="1">
    <original>AL</original>
    <variation>P</variation>
    <location>
        <begin position="183"/>
        <end position="184"/>
    </location>
</feature>
<feature type="sequence conflict" description="In Ref. 1; AAA85105." evidence="3" ref="1">
    <original>A</original>
    <variation>S</variation>
    <location>
        <position position="187"/>
    </location>
</feature>
<feature type="sequence conflict" description="In Ref. 1." evidence="3" ref="1">
    <original>AGLLIAFGVKLAI</original>
    <variation>TGLALVAFAVKISH</variation>
    <location>
        <begin position="215"/>
        <end position="227"/>
    </location>
</feature>
<feature type="sequence conflict" description="In Ref. 1; AAA85105." evidence="3" ref="1">
    <original>DNM</original>
    <variation>AH</variation>
    <location>
        <begin position="299"/>
        <end position="301"/>
    </location>
</feature>
<feature type="sequence conflict" description="In Ref. 1." evidence="3" ref="1">
    <original>GIASFTDLGISGAM</original>
    <variation>LFSITIGIMDH</variation>
    <location>
        <begin position="319"/>
        <end position="332"/>
    </location>
</feature>
<feature type="sequence conflict" description="In Ref. 1; AAA85105." evidence="3" ref="1">
    <original>A</original>
    <variation>R</variation>
    <location>
        <position position="343"/>
    </location>
</feature>
<feature type="sequence conflict" description="In Ref. 1; AAA85105." evidence="3" ref="1">
    <original>LA</original>
    <variation>PWT</variation>
    <location>
        <begin position="348"/>
        <end position="349"/>
    </location>
</feature>
<feature type="sequence conflict" description="In Ref. 1; AAA85105." evidence="3" ref="1">
    <original>H</original>
    <variation>N</variation>
    <location>
        <position position="357"/>
    </location>
</feature>
<feature type="sequence conflict" description="In Ref. 1; AAA85105." evidence="3" ref="1">
    <original>T</original>
    <variation>P</variation>
    <location>
        <position position="379"/>
    </location>
</feature>
<feature type="sequence conflict" description="In Ref. 1." evidence="3" ref="1">
    <original>Q</original>
    <variation>QE</variation>
    <location>
        <position position="522"/>
    </location>
</feature>
<reference key="1">
    <citation type="journal article" date="1994" name="Plant Physiol.">
        <title>Deletion of the structural gene for the NADH-dehydrogenase subunit 4 of Synechocystis 6803 alters respiratory properties.</title>
        <authorList>
            <person name="Dzelzkalns V.A."/>
            <person name="Obinger C."/>
            <person name="Regelsberger G."/>
            <person name="Niederhauser H."/>
            <person name="Kamensek M."/>
            <person name="Peschek G.A."/>
            <person name="Bogorad L."/>
        </authorList>
    </citation>
    <scope>NUCLEOTIDE SEQUENCE [GENOMIC DNA]</scope>
</reference>
<reference key="2">
    <citation type="journal article" date="1996" name="DNA Res.">
        <title>Sequence analysis of the genome of the unicellular cyanobacterium Synechocystis sp. strain PCC6803. II. Sequence determination of the entire genome and assignment of potential protein-coding regions.</title>
        <authorList>
            <person name="Kaneko T."/>
            <person name="Sato S."/>
            <person name="Kotani H."/>
            <person name="Tanaka A."/>
            <person name="Asamizu E."/>
            <person name="Nakamura Y."/>
            <person name="Miyajima N."/>
            <person name="Hirosawa M."/>
            <person name="Sugiura M."/>
            <person name="Sasamoto S."/>
            <person name="Kimura T."/>
            <person name="Hosouchi T."/>
            <person name="Matsuno A."/>
            <person name="Muraki A."/>
            <person name="Nakazaki N."/>
            <person name="Naruo K."/>
            <person name="Okumura S."/>
            <person name="Shimpo S."/>
            <person name="Takeuchi C."/>
            <person name="Wada T."/>
            <person name="Watanabe A."/>
            <person name="Yamada M."/>
            <person name="Yasuda M."/>
            <person name="Tabata S."/>
        </authorList>
    </citation>
    <scope>NUCLEOTIDE SEQUENCE [LARGE SCALE GENOMIC DNA]</scope>
    <source>
        <strain>ATCC 27184 / PCC 6803 / Kazusa</strain>
    </source>
</reference>
<organism>
    <name type="scientific">Synechocystis sp. (strain ATCC 27184 / PCC 6803 / Kazusa)</name>
    <dbReference type="NCBI Taxonomy" id="1111708"/>
    <lineage>
        <taxon>Bacteria</taxon>
        <taxon>Bacillati</taxon>
        <taxon>Cyanobacteriota</taxon>
        <taxon>Cyanophyceae</taxon>
        <taxon>Synechococcales</taxon>
        <taxon>Merismopediaceae</taxon>
        <taxon>Synechocystis</taxon>
    </lineage>
</organism>
<dbReference type="EC" id="7.1.1.-"/>
<dbReference type="EMBL" id="U14130">
    <property type="protein sequence ID" value="AAA85105.1"/>
    <property type="status" value="ALT_FRAME"/>
    <property type="molecule type" value="Genomic_DNA"/>
</dbReference>
<dbReference type="EMBL" id="BA000022">
    <property type="protein sequence ID" value="BAA16838.1"/>
    <property type="molecule type" value="Genomic_DNA"/>
</dbReference>
<dbReference type="PIR" id="S74687">
    <property type="entry name" value="S74687"/>
</dbReference>
<dbReference type="PIR" id="T14239">
    <property type="entry name" value="T14239"/>
</dbReference>
<dbReference type="SMR" id="P72823"/>
<dbReference type="IntAct" id="P72823">
    <property type="interactions" value="2"/>
</dbReference>
<dbReference type="STRING" id="1148.gene:10497696"/>
<dbReference type="PaxDb" id="1148-1651912"/>
<dbReference type="EnsemblBacteria" id="BAA16838">
    <property type="protein sequence ID" value="BAA16838"/>
    <property type="gene ID" value="BAA16838"/>
</dbReference>
<dbReference type="KEGG" id="syn:slr1291"/>
<dbReference type="eggNOG" id="COG1008">
    <property type="taxonomic scope" value="Bacteria"/>
</dbReference>
<dbReference type="InParanoid" id="P72823"/>
<dbReference type="PhylomeDB" id="P72823"/>
<dbReference type="Proteomes" id="UP000001425">
    <property type="component" value="Chromosome"/>
</dbReference>
<dbReference type="GO" id="GO:0031676">
    <property type="term" value="C:plasma membrane-derived thylakoid membrane"/>
    <property type="evidence" value="ECO:0007669"/>
    <property type="project" value="UniProtKB-SubCell"/>
</dbReference>
<dbReference type="GO" id="GO:0008137">
    <property type="term" value="F:NADH dehydrogenase (ubiquinone) activity"/>
    <property type="evidence" value="ECO:0007669"/>
    <property type="project" value="InterPro"/>
</dbReference>
<dbReference type="GO" id="GO:0048039">
    <property type="term" value="F:ubiquinone binding"/>
    <property type="evidence" value="ECO:0000318"/>
    <property type="project" value="GO_Central"/>
</dbReference>
<dbReference type="GO" id="GO:0009060">
    <property type="term" value="P:aerobic respiration"/>
    <property type="evidence" value="ECO:0000318"/>
    <property type="project" value="GO_Central"/>
</dbReference>
<dbReference type="GO" id="GO:0042773">
    <property type="term" value="P:ATP synthesis coupled electron transport"/>
    <property type="evidence" value="ECO:0007669"/>
    <property type="project" value="InterPro"/>
</dbReference>
<dbReference type="GO" id="GO:0015990">
    <property type="term" value="P:electron transport coupled proton transport"/>
    <property type="evidence" value="ECO:0000318"/>
    <property type="project" value="GO_Central"/>
</dbReference>
<dbReference type="HAMAP" id="MF_00491">
    <property type="entry name" value="NDH1_NuoM"/>
    <property type="match status" value="1"/>
</dbReference>
<dbReference type="InterPro" id="IPR022997">
    <property type="entry name" value="NADH_Q_OxRdtase_chain4"/>
</dbReference>
<dbReference type="InterPro" id="IPR010227">
    <property type="entry name" value="NADH_Q_OxRdtase_chainM/4"/>
</dbReference>
<dbReference type="InterPro" id="IPR003918">
    <property type="entry name" value="NADH_UbQ_OxRdtase"/>
</dbReference>
<dbReference type="InterPro" id="IPR001750">
    <property type="entry name" value="ND/Mrp_TM"/>
</dbReference>
<dbReference type="NCBIfam" id="TIGR01972">
    <property type="entry name" value="NDH_I_M"/>
    <property type="match status" value="1"/>
</dbReference>
<dbReference type="NCBIfam" id="NF009212">
    <property type="entry name" value="PRK12561.1"/>
    <property type="match status" value="1"/>
</dbReference>
<dbReference type="PANTHER" id="PTHR43507:SF21">
    <property type="entry name" value="NAD(P)H-QUINONE OXIDOREDUCTASE CHAIN 4, CHLOROPLASTIC"/>
    <property type="match status" value="1"/>
</dbReference>
<dbReference type="PANTHER" id="PTHR43507">
    <property type="entry name" value="NADH-UBIQUINONE OXIDOREDUCTASE CHAIN 4"/>
    <property type="match status" value="1"/>
</dbReference>
<dbReference type="Pfam" id="PF00361">
    <property type="entry name" value="Proton_antipo_M"/>
    <property type="match status" value="1"/>
</dbReference>
<dbReference type="PRINTS" id="PR01437">
    <property type="entry name" value="NUOXDRDTASE4"/>
</dbReference>
<name>NU4C2_SYNY3</name>
<protein>
    <recommendedName>
        <fullName>NAD(P)H-quinone oxidoreductase chain 4-2</fullName>
        <ecNumber>7.1.1.-</ecNumber>
    </recommendedName>
    <alternativeName>
        <fullName>NAD(P)H dehydrogenase I, subunit D-2</fullName>
    </alternativeName>
    <alternativeName>
        <fullName>NDH-1, chain 4-2</fullName>
    </alternativeName>
</protein>
<accession>P72823</accession>
<accession>Q55021</accession>
<evidence type="ECO:0000250" key="1"/>
<evidence type="ECO:0000255" key="2"/>
<evidence type="ECO:0000305" key="3"/>
<keyword id="KW-0472">Membrane</keyword>
<keyword id="KW-0520">NAD</keyword>
<keyword id="KW-0521">NADP</keyword>
<keyword id="KW-0618">Plastoquinone</keyword>
<keyword id="KW-0874">Quinone</keyword>
<keyword id="KW-1185">Reference proteome</keyword>
<keyword id="KW-0793">Thylakoid</keyword>
<keyword id="KW-1278">Translocase</keyword>
<keyword id="KW-0812">Transmembrane</keyword>
<keyword id="KW-1133">Transmembrane helix</keyword>